<dbReference type="EMBL" id="AP006618">
    <property type="protein sequence ID" value="BAD55907.1"/>
    <property type="molecule type" value="Genomic_DNA"/>
</dbReference>
<dbReference type="RefSeq" id="WP_011207592.1">
    <property type="nucleotide sequence ID" value="NC_006361.1"/>
</dbReference>
<dbReference type="SMR" id="Q5Z0Y4"/>
<dbReference type="STRING" id="247156.NFA_10620"/>
<dbReference type="GeneID" id="61131884"/>
<dbReference type="KEGG" id="nfa:NFA_10620"/>
<dbReference type="eggNOG" id="COG0712">
    <property type="taxonomic scope" value="Bacteria"/>
</dbReference>
<dbReference type="HOGENOM" id="CLU_088880_0_0_11"/>
<dbReference type="OrthoDB" id="5242917at2"/>
<dbReference type="Proteomes" id="UP000006820">
    <property type="component" value="Chromosome"/>
</dbReference>
<dbReference type="GO" id="GO:0005886">
    <property type="term" value="C:plasma membrane"/>
    <property type="evidence" value="ECO:0007669"/>
    <property type="project" value="UniProtKB-SubCell"/>
</dbReference>
<dbReference type="GO" id="GO:0045259">
    <property type="term" value="C:proton-transporting ATP synthase complex"/>
    <property type="evidence" value="ECO:0007669"/>
    <property type="project" value="UniProtKB-KW"/>
</dbReference>
<dbReference type="GO" id="GO:0046933">
    <property type="term" value="F:proton-transporting ATP synthase activity, rotational mechanism"/>
    <property type="evidence" value="ECO:0007669"/>
    <property type="project" value="UniProtKB-UniRule"/>
</dbReference>
<dbReference type="Gene3D" id="1.10.520.20">
    <property type="entry name" value="N-terminal domain of the delta subunit of the F1F0-ATP synthase"/>
    <property type="match status" value="1"/>
</dbReference>
<dbReference type="HAMAP" id="MF_01416">
    <property type="entry name" value="ATP_synth_delta_bact"/>
    <property type="match status" value="1"/>
</dbReference>
<dbReference type="InterPro" id="IPR026015">
    <property type="entry name" value="ATP_synth_OSCP/delta_N_sf"/>
</dbReference>
<dbReference type="InterPro" id="IPR020781">
    <property type="entry name" value="ATPase_OSCP/d_CS"/>
</dbReference>
<dbReference type="InterPro" id="IPR000711">
    <property type="entry name" value="ATPase_OSCP/dsu"/>
</dbReference>
<dbReference type="NCBIfam" id="TIGR01145">
    <property type="entry name" value="ATP_synt_delta"/>
    <property type="match status" value="1"/>
</dbReference>
<dbReference type="NCBIfam" id="NF009967">
    <property type="entry name" value="PRK13430.1"/>
    <property type="match status" value="1"/>
</dbReference>
<dbReference type="PANTHER" id="PTHR11910">
    <property type="entry name" value="ATP SYNTHASE DELTA CHAIN"/>
    <property type="match status" value="1"/>
</dbReference>
<dbReference type="Pfam" id="PF00213">
    <property type="entry name" value="OSCP"/>
    <property type="match status" value="1"/>
</dbReference>
<dbReference type="PRINTS" id="PR00125">
    <property type="entry name" value="ATPASEDELTA"/>
</dbReference>
<dbReference type="SUPFAM" id="SSF47928">
    <property type="entry name" value="N-terminal domain of the delta subunit of the F1F0-ATP synthase"/>
    <property type="match status" value="1"/>
</dbReference>
<dbReference type="PROSITE" id="PS00389">
    <property type="entry name" value="ATPASE_DELTA"/>
    <property type="match status" value="1"/>
</dbReference>
<organism>
    <name type="scientific">Nocardia farcinica (strain IFM 10152)</name>
    <dbReference type="NCBI Taxonomy" id="247156"/>
    <lineage>
        <taxon>Bacteria</taxon>
        <taxon>Bacillati</taxon>
        <taxon>Actinomycetota</taxon>
        <taxon>Actinomycetes</taxon>
        <taxon>Mycobacteriales</taxon>
        <taxon>Nocardiaceae</taxon>
        <taxon>Nocardia</taxon>
    </lineage>
</organism>
<protein>
    <recommendedName>
        <fullName evidence="1">ATP synthase subunit delta</fullName>
    </recommendedName>
    <alternativeName>
        <fullName evidence="1">ATP synthase F(1) sector subunit delta</fullName>
    </alternativeName>
    <alternativeName>
        <fullName evidence="1">F-type ATPase subunit delta</fullName>
        <shortName evidence="1">F-ATPase subunit delta</shortName>
    </alternativeName>
</protein>
<sequence>MYAASREASSRSREALRAALTGSDSVAATTGSELFAVVAVLDDQRSLRVALADVSVPGSARAELSERVFGGKVSVATQAVLTTAVAQNWSRTSDMVDTLVLLGQEALLESAANAGRLDAVEDELFRLGRIIADNADLEQALSDRAKPAAAKRELIARLLAGKAEPVTISLAEQVVGRNTTRIGAAFDELSDLAAARRDQIVAHVRAAIALTSQQRERLAASLQRIYGKPVTVHVQVDPSLLSGLVVRIGDDVIDGSAVGRLERLRRELA</sequence>
<keyword id="KW-0066">ATP synthesis</keyword>
<keyword id="KW-1003">Cell membrane</keyword>
<keyword id="KW-0139">CF(1)</keyword>
<keyword id="KW-0375">Hydrogen ion transport</keyword>
<keyword id="KW-0406">Ion transport</keyword>
<keyword id="KW-0472">Membrane</keyword>
<keyword id="KW-1185">Reference proteome</keyword>
<keyword id="KW-0813">Transport</keyword>
<reference key="1">
    <citation type="journal article" date="2004" name="Proc. Natl. Acad. Sci. U.S.A.">
        <title>The complete genomic sequence of Nocardia farcinica IFM 10152.</title>
        <authorList>
            <person name="Ishikawa J."/>
            <person name="Yamashita A."/>
            <person name="Mikami Y."/>
            <person name="Hoshino Y."/>
            <person name="Kurita H."/>
            <person name="Hotta K."/>
            <person name="Shiba T."/>
            <person name="Hattori M."/>
        </authorList>
    </citation>
    <scope>NUCLEOTIDE SEQUENCE [LARGE SCALE GENOMIC DNA]</scope>
    <source>
        <strain>IFM 10152</strain>
    </source>
</reference>
<name>ATPD_NOCFA</name>
<gene>
    <name evidence="1" type="primary">atpH</name>
    <name type="ordered locus">NFA_10620</name>
</gene>
<accession>Q5Z0Y4</accession>
<proteinExistence type="inferred from homology"/>
<evidence type="ECO:0000255" key="1">
    <source>
        <dbReference type="HAMAP-Rule" id="MF_01416"/>
    </source>
</evidence>
<comment type="function">
    <text evidence="1">F(1)F(0) ATP synthase produces ATP from ADP in the presence of a proton or sodium gradient. F-type ATPases consist of two structural domains, F(1) containing the extramembraneous catalytic core and F(0) containing the membrane proton channel, linked together by a central stalk and a peripheral stalk. During catalysis, ATP synthesis in the catalytic domain of F(1) is coupled via a rotary mechanism of the central stalk subunits to proton translocation.</text>
</comment>
<comment type="function">
    <text evidence="1">This protein is part of the stalk that links CF(0) to CF(1). It either transmits conformational changes from CF(0) to CF(1) or is implicated in proton conduction.</text>
</comment>
<comment type="subunit">
    <text evidence="1">F-type ATPases have 2 components, F(1) - the catalytic core - and F(0) - the membrane proton channel. F(1) has five subunits: alpha(3), beta(3), gamma(1), delta(1), epsilon(1). F(0) has three main subunits: a(1), b(2) and c(10-14). The alpha and beta chains form an alternating ring which encloses part of the gamma chain. F(1) is attached to F(0) by a central stalk formed by the gamma and epsilon chains, while a peripheral stalk is formed by the delta and b chains.</text>
</comment>
<comment type="subcellular location">
    <subcellularLocation>
        <location evidence="1">Cell membrane</location>
        <topology evidence="1">Peripheral membrane protein</topology>
    </subcellularLocation>
</comment>
<comment type="similarity">
    <text evidence="1">Belongs to the ATPase delta chain family.</text>
</comment>
<feature type="chain" id="PRO_0000382130" description="ATP synthase subunit delta">
    <location>
        <begin position="1"/>
        <end position="269"/>
    </location>
</feature>